<evidence type="ECO:0000255" key="1">
    <source>
        <dbReference type="HAMAP-Rule" id="MF_00294"/>
    </source>
</evidence>
<organism>
    <name type="scientific">Streptococcus pyogenes serotype M6 (strain ATCC BAA-946 / MGAS10394)</name>
    <dbReference type="NCBI Taxonomy" id="286636"/>
    <lineage>
        <taxon>Bacteria</taxon>
        <taxon>Bacillati</taxon>
        <taxon>Bacillota</taxon>
        <taxon>Bacilli</taxon>
        <taxon>Lactobacillales</taxon>
        <taxon>Streptococcaceae</taxon>
        <taxon>Streptococcus</taxon>
    </lineage>
</organism>
<feature type="chain" id="PRO_0000356738" description="Large ribosomal subunit protein bL33A">
    <location>
        <begin position="1"/>
        <end position="48"/>
    </location>
</feature>
<comment type="similarity">
    <text evidence="1">Belongs to the bacterial ribosomal protein bL33 family.</text>
</comment>
<sequence length="48" mass="5548">MRVKINLECSECGSNNYLTSKNKSSHPEKIKVPKYCPKERKVTLHVET</sequence>
<gene>
    <name evidence="1" type="primary">rpmG1</name>
    <name type="ordered locus">M6_Spy0439</name>
</gene>
<accession>Q5XDD9</accession>
<proteinExistence type="inferred from homology"/>
<reference key="1">
    <citation type="journal article" date="2004" name="J. Infect. Dis.">
        <title>Progress toward characterization of the group A Streptococcus metagenome: complete genome sequence of a macrolide-resistant serotype M6 strain.</title>
        <authorList>
            <person name="Banks D.J."/>
            <person name="Porcella S.F."/>
            <person name="Barbian K.D."/>
            <person name="Beres S.B."/>
            <person name="Philips L.E."/>
            <person name="Voyich J.M."/>
            <person name="DeLeo F.R."/>
            <person name="Martin J.M."/>
            <person name="Somerville G.A."/>
            <person name="Musser J.M."/>
        </authorList>
    </citation>
    <scope>NUCLEOTIDE SEQUENCE [LARGE SCALE GENOMIC DNA]</scope>
    <source>
        <strain>ATCC BAA-946 / MGAS10394</strain>
    </source>
</reference>
<keyword id="KW-0687">Ribonucleoprotein</keyword>
<keyword id="KW-0689">Ribosomal protein</keyword>
<protein>
    <recommendedName>
        <fullName evidence="1">Large ribosomal subunit protein bL33A</fullName>
    </recommendedName>
    <alternativeName>
        <fullName evidence="1">50S ribosomal protein L33 1</fullName>
    </alternativeName>
</protein>
<dbReference type="EMBL" id="CP000003">
    <property type="protein sequence ID" value="AAT86574.1"/>
    <property type="molecule type" value="Genomic_DNA"/>
</dbReference>
<dbReference type="SMR" id="Q5XDD9"/>
<dbReference type="KEGG" id="spa:M6_Spy0439"/>
<dbReference type="HOGENOM" id="CLU_190949_0_2_9"/>
<dbReference type="Proteomes" id="UP000001167">
    <property type="component" value="Chromosome"/>
</dbReference>
<dbReference type="GO" id="GO:0005737">
    <property type="term" value="C:cytoplasm"/>
    <property type="evidence" value="ECO:0007669"/>
    <property type="project" value="UniProtKB-ARBA"/>
</dbReference>
<dbReference type="GO" id="GO:1990904">
    <property type="term" value="C:ribonucleoprotein complex"/>
    <property type="evidence" value="ECO:0007669"/>
    <property type="project" value="UniProtKB-KW"/>
</dbReference>
<dbReference type="GO" id="GO:0005840">
    <property type="term" value="C:ribosome"/>
    <property type="evidence" value="ECO:0007669"/>
    <property type="project" value="UniProtKB-KW"/>
</dbReference>
<dbReference type="GO" id="GO:0003735">
    <property type="term" value="F:structural constituent of ribosome"/>
    <property type="evidence" value="ECO:0007669"/>
    <property type="project" value="InterPro"/>
</dbReference>
<dbReference type="GO" id="GO:0006412">
    <property type="term" value="P:translation"/>
    <property type="evidence" value="ECO:0007669"/>
    <property type="project" value="UniProtKB-UniRule"/>
</dbReference>
<dbReference type="Gene3D" id="2.20.28.120">
    <property type="entry name" value="Ribosomal protein L33"/>
    <property type="match status" value="1"/>
</dbReference>
<dbReference type="HAMAP" id="MF_00294">
    <property type="entry name" value="Ribosomal_bL33"/>
    <property type="match status" value="1"/>
</dbReference>
<dbReference type="InterPro" id="IPR001705">
    <property type="entry name" value="Ribosomal_bL33"/>
</dbReference>
<dbReference type="InterPro" id="IPR038584">
    <property type="entry name" value="Ribosomal_bL33_sf"/>
</dbReference>
<dbReference type="InterPro" id="IPR011332">
    <property type="entry name" value="Ribosomal_zn-bd"/>
</dbReference>
<dbReference type="NCBIfam" id="NF001764">
    <property type="entry name" value="PRK00504.1"/>
    <property type="match status" value="1"/>
</dbReference>
<dbReference type="NCBIfam" id="NF001860">
    <property type="entry name" value="PRK00595.1"/>
    <property type="match status" value="1"/>
</dbReference>
<dbReference type="NCBIfam" id="TIGR01023">
    <property type="entry name" value="rpmG_bact"/>
    <property type="match status" value="1"/>
</dbReference>
<dbReference type="PANTHER" id="PTHR43168">
    <property type="entry name" value="50S RIBOSOMAL PROTEIN L33, CHLOROPLASTIC"/>
    <property type="match status" value="1"/>
</dbReference>
<dbReference type="PANTHER" id="PTHR43168:SF6">
    <property type="entry name" value="LARGE RIBOSOMAL SUBUNIT PROTEIN BL33A"/>
    <property type="match status" value="1"/>
</dbReference>
<dbReference type="Pfam" id="PF00471">
    <property type="entry name" value="Ribosomal_L33"/>
    <property type="match status" value="1"/>
</dbReference>
<dbReference type="SUPFAM" id="SSF57829">
    <property type="entry name" value="Zn-binding ribosomal proteins"/>
    <property type="match status" value="1"/>
</dbReference>
<name>RL331_STRP6</name>